<keyword id="KW-0125">Carotenoid biosynthesis</keyword>
<keyword id="KW-0238">DNA-binding</keyword>
<keyword id="KW-0678">Repressor</keyword>
<keyword id="KW-0804">Transcription</keyword>
<keyword id="KW-0805">Transcription regulation</keyword>
<reference key="1">
    <citation type="journal article" date="1995" name="Eur. J. Biochem.">
        <title>A cluster of structural and regulatory genes for light-induced carotenogenesis in Myxococcus xanthus.</title>
        <authorList>
            <person name="Botella J.A."/>
            <person name="Murillo F.J."/>
            <person name="Ruiz-Vazquez R.M."/>
        </authorList>
    </citation>
    <scope>NUCLEOTIDE SEQUENCE [GENOMIC DNA]</scope>
    <source>
        <strain>DK1050</strain>
    </source>
</reference>
<reference key="2">
    <citation type="journal article" date="2008" name="Mol. Microbiol.">
        <title>Vitamin B12 partners the CarH repressor to downregulate a photoinducible promoter in Myxococcus xanthus.</title>
        <authorList>
            <person name="Perez-Marin M.C."/>
            <person name="Padmanabhan S."/>
            <person name="Polanco M.C."/>
            <person name="Murillo F.J."/>
            <person name="Elias-Arnanz M."/>
        </authorList>
    </citation>
    <scope>FUNCTION</scope>
    <scope>DNA-BINDING</scope>
    <scope>ACTIVITY REGULATION</scope>
    <scope>SUBUNIT</scope>
    <scope>INTERACTION WITH CARS</scope>
    <scope>DOMAIN</scope>
    <scope>GENE NAME</scope>
    <scope>MUTAGENESIS OF ARG-42 AND HIS-193</scope>
    <source>
        <strain>DK1050</strain>
    </source>
</reference>
<reference key="3">
    <citation type="journal article" date="2011" name="Proc. Natl. Acad. Sci. U.S.A.">
        <title>Light-dependent gene regulation by a coenzyme B12-based photoreceptor.</title>
        <authorList>
            <person name="Ortiz-Guerrero J.M."/>
            <person name="Polanco M.C."/>
            <person name="Murillo F.J."/>
            <person name="Padmanabhan S."/>
            <person name="Elias-Arnanz M."/>
        </authorList>
    </citation>
    <scope>ACTIVITY REGULATION</scope>
    <source>
        <strain>DK1050</strain>
    </source>
</reference>
<evidence type="ECO:0000255" key="1">
    <source>
        <dbReference type="PROSITE-ProRule" id="PRU00254"/>
    </source>
</evidence>
<evidence type="ECO:0000255" key="2">
    <source>
        <dbReference type="PROSITE-ProRule" id="PRU00666"/>
    </source>
</evidence>
<evidence type="ECO:0000269" key="3">
    <source>
    </source>
</evidence>
<evidence type="ECO:0000269" key="4">
    <source>
    </source>
</evidence>
<evidence type="ECO:0000305" key="5"/>
<proteinExistence type="evidence at protein level"/>
<dbReference type="EMBL" id="Z21955">
    <property type="protein sequence ID" value="CAA79965.2"/>
    <property type="molecule type" value="Genomic_DNA"/>
</dbReference>
<dbReference type="PIR" id="S68198">
    <property type="entry name" value="S68198"/>
</dbReference>
<dbReference type="RefSeq" id="WP_011551025.1">
    <property type="nucleotide sequence ID" value="NZ_JABFNQ010000052.1"/>
</dbReference>
<dbReference type="SMR" id="Q50900"/>
<dbReference type="OMA" id="HAETWRE"/>
<dbReference type="GO" id="GO:0031419">
    <property type="term" value="F:cobalamin binding"/>
    <property type="evidence" value="ECO:0007669"/>
    <property type="project" value="InterPro"/>
</dbReference>
<dbReference type="GO" id="GO:0003677">
    <property type="term" value="F:DNA binding"/>
    <property type="evidence" value="ECO:0007669"/>
    <property type="project" value="UniProtKB-KW"/>
</dbReference>
<dbReference type="GO" id="GO:0003700">
    <property type="term" value="F:DNA-binding transcription factor activity"/>
    <property type="evidence" value="ECO:0007669"/>
    <property type="project" value="InterPro"/>
</dbReference>
<dbReference type="GO" id="GO:0046872">
    <property type="term" value="F:metal ion binding"/>
    <property type="evidence" value="ECO:0007669"/>
    <property type="project" value="InterPro"/>
</dbReference>
<dbReference type="GO" id="GO:0016117">
    <property type="term" value="P:carotenoid biosynthetic process"/>
    <property type="evidence" value="ECO:0007669"/>
    <property type="project" value="UniProtKB-KW"/>
</dbReference>
<dbReference type="CDD" id="cd02065">
    <property type="entry name" value="B12-binding_like"/>
    <property type="match status" value="1"/>
</dbReference>
<dbReference type="CDD" id="cd01104">
    <property type="entry name" value="HTH_MlrA-CarA"/>
    <property type="match status" value="1"/>
</dbReference>
<dbReference type="Gene3D" id="1.10.1660.10">
    <property type="match status" value="1"/>
</dbReference>
<dbReference type="Gene3D" id="3.40.50.280">
    <property type="entry name" value="Cobalamin-binding domain"/>
    <property type="match status" value="1"/>
</dbReference>
<dbReference type="Gene3D" id="1.10.1240.10">
    <property type="entry name" value="Methionine synthase domain"/>
    <property type="match status" value="1"/>
</dbReference>
<dbReference type="InterPro" id="IPR003759">
    <property type="entry name" value="Cbl-bd_cap"/>
</dbReference>
<dbReference type="InterPro" id="IPR006158">
    <property type="entry name" value="Cobalamin-bd"/>
</dbReference>
<dbReference type="InterPro" id="IPR036724">
    <property type="entry name" value="Cobalamin-bd_sf"/>
</dbReference>
<dbReference type="InterPro" id="IPR009061">
    <property type="entry name" value="DNA-bd_dom_put_sf"/>
</dbReference>
<dbReference type="InterPro" id="IPR000551">
    <property type="entry name" value="MerR-type_HTH_dom"/>
</dbReference>
<dbReference type="InterPro" id="IPR047057">
    <property type="entry name" value="MerR_fam"/>
</dbReference>
<dbReference type="InterPro" id="IPR036594">
    <property type="entry name" value="Meth_synthase_dom"/>
</dbReference>
<dbReference type="PANTHER" id="PTHR30204:SF69">
    <property type="entry name" value="MERR-FAMILY TRANSCRIPTIONAL REGULATOR"/>
    <property type="match status" value="1"/>
</dbReference>
<dbReference type="PANTHER" id="PTHR30204">
    <property type="entry name" value="REDOX-CYCLING DRUG-SENSING TRANSCRIPTIONAL ACTIVATOR SOXR"/>
    <property type="match status" value="1"/>
</dbReference>
<dbReference type="Pfam" id="PF02310">
    <property type="entry name" value="B12-binding"/>
    <property type="match status" value="1"/>
</dbReference>
<dbReference type="Pfam" id="PF02607">
    <property type="entry name" value="B12-binding_2"/>
    <property type="match status" value="1"/>
</dbReference>
<dbReference type="Pfam" id="PF13411">
    <property type="entry name" value="MerR_1"/>
    <property type="match status" value="1"/>
</dbReference>
<dbReference type="SMART" id="SM00422">
    <property type="entry name" value="HTH_MERR"/>
    <property type="match status" value="1"/>
</dbReference>
<dbReference type="SUPFAM" id="SSF52242">
    <property type="entry name" value="Cobalamin (vitamin B12)-binding domain"/>
    <property type="match status" value="1"/>
</dbReference>
<dbReference type="SUPFAM" id="SSF46955">
    <property type="entry name" value="Putative DNA-binding domain"/>
    <property type="match status" value="1"/>
</dbReference>
<dbReference type="PROSITE" id="PS51332">
    <property type="entry name" value="B12_BINDING"/>
    <property type="match status" value="1"/>
</dbReference>
<dbReference type="PROSITE" id="PS51337">
    <property type="entry name" value="B12_BINDING_NTER"/>
    <property type="match status" value="1"/>
</dbReference>
<dbReference type="PROSITE" id="PS50937">
    <property type="entry name" value="HTH_MERR_2"/>
    <property type="match status" value="1"/>
</dbReference>
<gene>
    <name type="primary">carH</name>
</gene>
<comment type="function">
    <text evidence="3">Negative regulator of the carB operon in the dark. Binds specifically to the CarA operator, in the region around the carB promoter, which blocks access to the RNA polymerase.</text>
</comment>
<comment type="activity regulation">
    <text evidence="3 4">Requires cobalamin (vitamin B12) for repressor activity. In the dark, binding of cobalamin to CarH induces its oligomerization, which enhances binding to the DNA and repressor activity. Light causes cobalamin photolysis and disruption of the cobalamin-CarH complex, which decreases interaction with DNA and allows transcription of the carB operon. Interaction with CarS also prevents binding to DNA.</text>
</comment>
<comment type="subunit">
    <text evidence="3">Forms oligomers. Interacts with CarS.</text>
</comment>
<comment type="domain">
    <text evidence="3">The N-terminal region interacts with DNA and CarS, and the C-terminal region is involved in oligomerization and binding of cobalamin.</text>
</comment>
<comment type="similarity">
    <text evidence="5">Belongs to the CarA/CarH B12-binding photoregulator family.</text>
</comment>
<accession>Q50900</accession>
<name>CARH_MYXXA</name>
<organism>
    <name type="scientific">Myxococcus xanthus</name>
    <dbReference type="NCBI Taxonomy" id="34"/>
    <lineage>
        <taxon>Bacteria</taxon>
        <taxon>Pseudomonadati</taxon>
        <taxon>Myxococcota</taxon>
        <taxon>Myxococcia</taxon>
        <taxon>Myxococcales</taxon>
        <taxon>Cystobacterineae</taxon>
        <taxon>Myxococcaceae</taxon>
        <taxon>Myxococcus</taxon>
    </lineage>
</organism>
<sequence>MAERTYRINIAAELAGVRVELIRAWERRYGVLTPRRTPAGYRAYTDRDVAVLKQLKRLTDEGVAISEAAKLLPQLMEGLEAEVAGRGASQDARPHAETWRESMLAATQAYDQPRVSDVLDEVLAALPPLKAFDEVLAPLLCDVGERWESGTLTVAQEHLVSQMVRARLVSLLHAAPLGRHRHGVLACFPEEEHEMGLLGAALRLRHLGVRVTLLGQRVPAEDLGRAVLALRPDFVGLSTVASRSAEDFEDTLTRLRQALPRGLPVWVGGAAARSHQAVCERLAVHVFQGEEDWDRLAGT</sequence>
<feature type="chain" id="PRO_0000429423" description="HTH-type transcriptional repressor CarH">
    <location>
        <begin position="1"/>
        <end position="299"/>
    </location>
</feature>
<feature type="domain" description="HTH merR-type" evidence="1">
    <location>
        <begin position="5"/>
        <end position="74"/>
    </location>
</feature>
<feature type="domain" description="B12-binding" evidence="2">
    <location>
        <begin position="180"/>
        <end position="299"/>
    </location>
</feature>
<feature type="DNA-binding region" description="H-T-H motif" evidence="1">
    <location>
        <begin position="8"/>
        <end position="27"/>
    </location>
</feature>
<feature type="mutagenesis site" description="Lack of activity, even in the presence of cobalamin. Retains the ability to interact with CarS." evidence="3">
    <original>R</original>
    <variation>A</variation>
    <location>
        <position position="42"/>
    </location>
</feature>
<feature type="mutagenesis site" description="Lack of activity. Decreases oligomerization." evidence="3">
    <original>H</original>
    <variation>A</variation>
    <location>
        <position position="193"/>
    </location>
</feature>
<protein>
    <recommendedName>
        <fullName>HTH-type transcriptional repressor CarH</fullName>
    </recommendedName>
</protein>